<organism evidence="5">
    <name type="scientific">Caenorhabditis elegans</name>
    <dbReference type="NCBI Taxonomy" id="6239"/>
    <lineage>
        <taxon>Eukaryota</taxon>
        <taxon>Metazoa</taxon>
        <taxon>Ecdysozoa</taxon>
        <taxon>Nematoda</taxon>
        <taxon>Chromadorea</taxon>
        <taxon>Rhabditida</taxon>
        <taxon>Rhabditina</taxon>
        <taxon>Rhabditomorpha</taxon>
        <taxon>Rhabditoidea</taxon>
        <taxon>Rhabditidae</taxon>
        <taxon>Peloderinae</taxon>
        <taxon>Caenorhabditis</taxon>
    </lineage>
</organism>
<sequence length="1086" mass="123495">MDFSEASTSGDRVNGFAKPFPPKPREGAPPPAPPLAPGASTSQAPPPLQPPPVIESAEKFYVPGVEEKSKFRILSQQVEISNLNISTRSFNVRTEIVLLPCEKSLYQLDLHIGKCSLLPNEVPGSASKVTLNGVECEYSRRDFWKDLAQEKSISSLEPVLYEKLAENDYELQILIPKEVRKKIKHRKAVRLRVDTVVRDPPRGLQFVDFNEHDCHVFTYHTPHISGAREWTVCLDEPDQLALWELTFELEPHLVPVASGELEEKREVSENGKIRYKFHQTVPTSACNIGWAIGRFKLEPHPESPTIYTFSLPGLEPFVNHTTMYLDKMVEFLEEKLSCRFPYPTLKVVFVDQCTEEIQVYSSLLIVPTAMLYHKKIIDVVQEARQKLIFSIALQFFGCLISPAQWWHWWIPVSIARFLTSLYVETKLGTAEARWQLKRAMDDVCDYEHQWGKIVLSPPEPTKKLPLHVDPRHEYTASPLYVEAMLKKGFLTMRMLQRRIGLEPFMRVLHRVLTVGLDMSEKKTTPAAWRHLLTTTESFFRSVISVTGKEIPSFLSQFVRTGGHAAFAVKFDFNRKRNIVEIEIKQDDTEGNGRTQYTGPLSVVVQEVDGAFTHTIQIDGAVSHAEISCHSKGRKQRKKKVPLLTGEEIEIDLTNMDAESPILWLRIDPDYLLIREITISQPMFHWEYMLRYERDVIAQMEALERIQALPSAHSRSVIVDAVANEKFFYRIRYRAAFVLTFVQNRKSEALTVGTPVLINMFRESFGSKAATNIPRSNNFVVTAQNLQQYFVMQALPQAIARLRRQSGECHEDVQPFLLDLIKFNDNSTNRYSDDFYRAALYNSLASSVFPHDALPCHVELPENLSNDVRVLIKEFTYALNMDTVSPSWGRVVGAAALTGLYQLQKCGYLPLDSQLLWTFSHPNCCVQMRRCAITLIIDRIVNDPHAADTRMLDLSRILELAELEQDPSIRRMIPRLLAQTPPTIFGSENAANTAETAERLWKLCTNSSIDSCIRSGFLDVYYSLYALGAPPALGGPEESVGIHRAYVTVPNAASTFATSQWHNSGYEAARRSPPRRDFGDETMNLMQ</sequence>
<protein>
    <recommendedName>
        <fullName evidence="1">Transcription initiation factor TFIID subunit 2</fullName>
    </recommendedName>
    <alternativeName>
        <fullName evidence="6">TBP-associated transcription factor 2</fullName>
    </alternativeName>
</protein>
<evidence type="ECO:0000250" key="1">
    <source>
        <dbReference type="UniProtKB" id="Q6P1X5"/>
    </source>
</evidence>
<evidence type="ECO:0000256" key="2">
    <source>
        <dbReference type="SAM" id="MobiDB-lite"/>
    </source>
</evidence>
<evidence type="ECO:0000269" key="3">
    <source>
    </source>
</evidence>
<evidence type="ECO:0000305" key="4"/>
<evidence type="ECO:0000312" key="5">
    <source>
        <dbReference type="Proteomes" id="UP000001940"/>
    </source>
</evidence>
<evidence type="ECO:0000312" key="6">
    <source>
        <dbReference type="WormBase" id="Y37E11B.4"/>
    </source>
</evidence>
<gene>
    <name evidence="6" type="primary">taf-2</name>
    <name evidence="6" type="ORF">Y37E11B.4</name>
</gene>
<keyword id="KW-0539">Nucleus</keyword>
<keyword id="KW-1185">Reference proteome</keyword>
<keyword id="KW-0804">Transcription</keyword>
<keyword id="KW-0805">Transcription regulation</keyword>
<comment type="function">
    <text evidence="1 3">The TFIID basal transcription factor complex plays a major role in the initiation of RNA polymerase II (Pol II)-dependent transcription (By similarity). TFIID recognizes and binds promoters via its subunit tbp-1, a TATA-box-binding protein, and promotes assembly of the pre-initiation complex (PIC) (By similarity). The TFIID complex consists of tbp-1 and TBP-associated factors (TAFs), including taf-2 (By similarity). May regulate RNA polymerase II activity and thereby may control transcription initiation by RNA polymerase II (PubMed:14726532).</text>
</comment>
<comment type="subunit">
    <text evidence="1">Component of the TFIID basal transcription factor complex, composed of TATA-box-binding protein tbp-1, and a number of TBP-associated factors (TAFs).</text>
</comment>
<comment type="subcellular location">
    <subcellularLocation>
        <location evidence="1">Nucleus</location>
    </subcellularLocation>
</comment>
<comment type="disruption phenotype">
    <text evidence="3">RNAi-mediated knockdown causes a severe loss of RNA polymerase II large subunit ama-1 phosphorylation.</text>
</comment>
<comment type="similarity">
    <text evidence="4">Belongs to the TAF2 family.</text>
</comment>
<accession>Q9TYN3</accession>
<reference evidence="5" key="1">
    <citation type="journal article" date="1998" name="Science">
        <title>Genome sequence of the nematode C. elegans: a platform for investigating biology.</title>
        <authorList>
            <consortium name="The C. elegans sequencing consortium"/>
        </authorList>
    </citation>
    <scope>NUCLEOTIDE SEQUENCE [LARGE SCALE GENOMIC DNA]</scope>
    <source>
        <strain evidence="5">Bristol N2</strain>
    </source>
</reference>
<reference evidence="4" key="2">
    <citation type="journal article" date="2002" name="Genes Dev.">
        <title>A unified nomenclature for TATA box binding protein (TBP)-associated factors (TAFs) involved in RNA polymerase II transcription.</title>
        <authorList>
            <person name="Tora L."/>
        </authorList>
    </citation>
    <scope>NOMENCLATURE</scope>
</reference>
<reference evidence="4" key="3">
    <citation type="journal article" date="2004" name="J. Biol. Chem.">
        <title>An extensive requirement for transcription factor IID-specific TAF-1 in Caenorhabditis elegans embryonic transcription.</title>
        <authorList>
            <person name="Walker A.K."/>
            <person name="Shi Y."/>
            <person name="Blackwell T.K."/>
        </authorList>
    </citation>
    <scope>FUNCTION</scope>
    <scope>SUBCELLULAR LOCATION</scope>
    <scope>DISRUPTION PHENOTYPE</scope>
</reference>
<proteinExistence type="inferred from homology"/>
<feature type="chain" id="PRO_0000435003" description="Transcription initiation factor TFIID subunit 2" evidence="4">
    <location>
        <begin position="1"/>
        <end position="1086"/>
    </location>
</feature>
<feature type="region of interest" description="Disordered" evidence="2">
    <location>
        <begin position="1"/>
        <end position="53"/>
    </location>
</feature>
<feature type="region of interest" description="Disordered" evidence="2">
    <location>
        <begin position="1064"/>
        <end position="1086"/>
    </location>
</feature>
<feature type="compositionally biased region" description="Polar residues" evidence="2">
    <location>
        <begin position="1"/>
        <end position="11"/>
    </location>
</feature>
<feature type="compositionally biased region" description="Pro residues" evidence="2">
    <location>
        <begin position="19"/>
        <end position="36"/>
    </location>
</feature>
<feature type="compositionally biased region" description="Pro residues" evidence="2">
    <location>
        <begin position="44"/>
        <end position="53"/>
    </location>
</feature>
<feature type="compositionally biased region" description="Basic and acidic residues" evidence="2">
    <location>
        <begin position="1067"/>
        <end position="1078"/>
    </location>
</feature>
<dbReference type="EMBL" id="BX284604">
    <property type="protein sequence ID" value="CCD61342.1"/>
    <property type="molecule type" value="Genomic_DNA"/>
</dbReference>
<dbReference type="PIR" id="T33893">
    <property type="entry name" value="T33893"/>
</dbReference>
<dbReference type="RefSeq" id="NP_500378.1">
    <property type="nucleotide sequence ID" value="NM_067977.3"/>
</dbReference>
<dbReference type="SMR" id="Q9TYN3"/>
<dbReference type="FunCoup" id="Q9TYN3">
    <property type="interactions" value="2183"/>
</dbReference>
<dbReference type="IntAct" id="Q9TYN3">
    <property type="interactions" value="2"/>
</dbReference>
<dbReference type="STRING" id="6239.Y37E11B.4.1"/>
<dbReference type="PaxDb" id="6239-Y37E11B.4"/>
<dbReference type="PeptideAtlas" id="Q9TYN3"/>
<dbReference type="EnsemblMetazoa" id="Y37E11B.4.1">
    <property type="protein sequence ID" value="Y37E11B.4.1"/>
    <property type="gene ID" value="WBGene00006383"/>
</dbReference>
<dbReference type="UCSC" id="Y37E11B.4">
    <property type="organism name" value="c. elegans"/>
</dbReference>
<dbReference type="AGR" id="WB:WBGene00006383"/>
<dbReference type="WormBase" id="Y37E11B.4">
    <property type="protein sequence ID" value="CE52319"/>
    <property type="gene ID" value="WBGene00006383"/>
    <property type="gene designation" value="taf-2"/>
</dbReference>
<dbReference type="eggNOG" id="KOG1932">
    <property type="taxonomic scope" value="Eukaryota"/>
</dbReference>
<dbReference type="GeneTree" id="ENSGT00390000000420"/>
<dbReference type="HOGENOM" id="CLU_002317_0_0_1"/>
<dbReference type="InParanoid" id="Q9TYN3"/>
<dbReference type="OMA" id="EQPDYQW"/>
<dbReference type="PhylomeDB" id="Q9TYN3"/>
<dbReference type="Reactome" id="R-CEL-674695">
    <property type="pathway name" value="RNA Polymerase II Pre-transcription Events"/>
</dbReference>
<dbReference type="Reactome" id="R-CEL-73776">
    <property type="pathway name" value="RNA Polymerase II Promoter Escape"/>
</dbReference>
<dbReference type="Reactome" id="R-CEL-73779">
    <property type="pathway name" value="RNA Polymerase II Transcription Pre-Initiation And Promoter Opening"/>
</dbReference>
<dbReference type="Reactome" id="R-CEL-75953">
    <property type="pathway name" value="RNA Polymerase II Transcription Initiation"/>
</dbReference>
<dbReference type="Reactome" id="R-CEL-76042">
    <property type="pathway name" value="RNA Polymerase II Transcription Initiation And Promoter Clearance"/>
</dbReference>
<dbReference type="PRO" id="PR:Q9TYN3"/>
<dbReference type="Proteomes" id="UP000001940">
    <property type="component" value="Chromosome IV"/>
</dbReference>
<dbReference type="Bgee" id="WBGene00006383">
    <property type="expression patterns" value="Expressed in embryo and 4 other cell types or tissues"/>
</dbReference>
<dbReference type="GO" id="GO:0005669">
    <property type="term" value="C:transcription factor TFIID complex"/>
    <property type="evidence" value="ECO:0000318"/>
    <property type="project" value="GO_Central"/>
</dbReference>
<dbReference type="GO" id="GO:0003682">
    <property type="term" value="F:chromatin binding"/>
    <property type="evidence" value="ECO:0000318"/>
    <property type="project" value="GO_Central"/>
</dbReference>
<dbReference type="GO" id="GO:0008237">
    <property type="term" value="F:metallopeptidase activity"/>
    <property type="evidence" value="ECO:0007669"/>
    <property type="project" value="InterPro"/>
</dbReference>
<dbReference type="GO" id="GO:0000976">
    <property type="term" value="F:transcription cis-regulatory region binding"/>
    <property type="evidence" value="ECO:0000318"/>
    <property type="project" value="GO_Central"/>
</dbReference>
<dbReference type="GO" id="GO:0008270">
    <property type="term" value="F:zinc ion binding"/>
    <property type="evidence" value="ECO:0007669"/>
    <property type="project" value="InterPro"/>
</dbReference>
<dbReference type="GO" id="GO:0009792">
    <property type="term" value="P:embryo development ending in birth or egg hatching"/>
    <property type="evidence" value="ECO:0000315"/>
    <property type="project" value="WormBase"/>
</dbReference>
<dbReference type="GO" id="GO:0006367">
    <property type="term" value="P:transcription initiation at RNA polymerase II promoter"/>
    <property type="evidence" value="ECO:0000315"/>
    <property type="project" value="WormBase"/>
</dbReference>
<dbReference type="CDD" id="cd09839">
    <property type="entry name" value="M1_like_TAF2"/>
    <property type="match status" value="1"/>
</dbReference>
<dbReference type="Gene3D" id="1.10.390.10">
    <property type="entry name" value="Neutral Protease Domain 2"/>
    <property type="match status" value="1"/>
</dbReference>
<dbReference type="Gene3D" id="2.60.40.1730">
    <property type="entry name" value="tricorn interacting facor f3 domain"/>
    <property type="match status" value="1"/>
</dbReference>
<dbReference type="InterPro" id="IPR045357">
    <property type="entry name" value="Aminopeptidase_N-like_N"/>
</dbReference>
<dbReference type="InterPro" id="IPR042097">
    <property type="entry name" value="Aminopeptidase_N-like_N_sf"/>
</dbReference>
<dbReference type="InterPro" id="IPR014782">
    <property type="entry name" value="Peptidase_M1_dom"/>
</dbReference>
<dbReference type="InterPro" id="IPR027268">
    <property type="entry name" value="Peptidase_M4/M1_CTD_sf"/>
</dbReference>
<dbReference type="InterPro" id="IPR037813">
    <property type="entry name" value="TAF2"/>
</dbReference>
<dbReference type="PANTHER" id="PTHR15137">
    <property type="entry name" value="TRANSCRIPTION INITIATION FACTOR TFIID"/>
    <property type="match status" value="1"/>
</dbReference>
<dbReference type="PANTHER" id="PTHR15137:SF9">
    <property type="entry name" value="TRANSCRIPTION INITIATION FACTOR TFIID SUBUNIT 2"/>
    <property type="match status" value="1"/>
</dbReference>
<dbReference type="Pfam" id="PF01433">
    <property type="entry name" value="Peptidase_M1"/>
    <property type="match status" value="1"/>
</dbReference>
<dbReference type="Pfam" id="PF17900">
    <property type="entry name" value="Peptidase_M1_N"/>
    <property type="match status" value="1"/>
</dbReference>
<dbReference type="Pfam" id="PF25316">
    <property type="entry name" value="TAF2_3rd"/>
    <property type="match status" value="1"/>
</dbReference>
<dbReference type="SUPFAM" id="SSF63737">
    <property type="entry name" value="Leukotriene A4 hydrolase N-terminal domain"/>
    <property type="match status" value="1"/>
</dbReference>
<dbReference type="SUPFAM" id="SSF55486">
    <property type="entry name" value="Metalloproteases ('zincins'), catalytic domain"/>
    <property type="match status" value="1"/>
</dbReference>
<name>TAF2_CAEEL</name>